<reference key="1">
    <citation type="journal article" date="1996" name="Microbiology">
        <title>Sequence analysis of the Bacillus subtilis chromosome region between the serA and kdg loci cloned in a yeast artificial chromosome.</title>
        <authorList>
            <person name="Sorokin A.V."/>
            <person name="Azevedo V."/>
            <person name="Zumstein E."/>
            <person name="Galleron N."/>
            <person name="Ehrlich S.D."/>
            <person name="Serror P."/>
        </authorList>
    </citation>
    <scope>NUCLEOTIDE SEQUENCE [GENOMIC DNA]</scope>
    <source>
        <strain>168 / Marburg / ATCC 6051 / DSM 10 / JCM 1465 / NBRC 13719 / NCIMB 3610 / NRRL NRS-744 / VKM B-501</strain>
    </source>
</reference>
<reference key="2">
    <citation type="journal article" date="1997" name="Nature">
        <title>The complete genome sequence of the Gram-positive bacterium Bacillus subtilis.</title>
        <authorList>
            <person name="Kunst F."/>
            <person name="Ogasawara N."/>
            <person name="Moszer I."/>
            <person name="Albertini A.M."/>
            <person name="Alloni G."/>
            <person name="Azevedo V."/>
            <person name="Bertero M.G."/>
            <person name="Bessieres P."/>
            <person name="Bolotin A."/>
            <person name="Borchert S."/>
            <person name="Borriss R."/>
            <person name="Boursier L."/>
            <person name="Brans A."/>
            <person name="Braun M."/>
            <person name="Brignell S.C."/>
            <person name="Bron S."/>
            <person name="Brouillet S."/>
            <person name="Bruschi C.V."/>
            <person name="Caldwell B."/>
            <person name="Capuano V."/>
            <person name="Carter N.M."/>
            <person name="Choi S.-K."/>
            <person name="Codani J.-J."/>
            <person name="Connerton I.F."/>
            <person name="Cummings N.J."/>
            <person name="Daniel R.A."/>
            <person name="Denizot F."/>
            <person name="Devine K.M."/>
            <person name="Duesterhoeft A."/>
            <person name="Ehrlich S.D."/>
            <person name="Emmerson P.T."/>
            <person name="Entian K.-D."/>
            <person name="Errington J."/>
            <person name="Fabret C."/>
            <person name="Ferrari E."/>
            <person name="Foulger D."/>
            <person name="Fritz C."/>
            <person name="Fujita M."/>
            <person name="Fujita Y."/>
            <person name="Fuma S."/>
            <person name="Galizzi A."/>
            <person name="Galleron N."/>
            <person name="Ghim S.-Y."/>
            <person name="Glaser P."/>
            <person name="Goffeau A."/>
            <person name="Golightly E.J."/>
            <person name="Grandi G."/>
            <person name="Guiseppi G."/>
            <person name="Guy B.J."/>
            <person name="Haga K."/>
            <person name="Haiech J."/>
            <person name="Harwood C.R."/>
            <person name="Henaut A."/>
            <person name="Hilbert H."/>
            <person name="Holsappel S."/>
            <person name="Hosono S."/>
            <person name="Hullo M.-F."/>
            <person name="Itaya M."/>
            <person name="Jones L.-M."/>
            <person name="Joris B."/>
            <person name="Karamata D."/>
            <person name="Kasahara Y."/>
            <person name="Klaerr-Blanchard M."/>
            <person name="Klein C."/>
            <person name="Kobayashi Y."/>
            <person name="Koetter P."/>
            <person name="Koningstein G."/>
            <person name="Krogh S."/>
            <person name="Kumano M."/>
            <person name="Kurita K."/>
            <person name="Lapidus A."/>
            <person name="Lardinois S."/>
            <person name="Lauber J."/>
            <person name="Lazarevic V."/>
            <person name="Lee S.-M."/>
            <person name="Levine A."/>
            <person name="Liu H."/>
            <person name="Masuda S."/>
            <person name="Mauel C."/>
            <person name="Medigue C."/>
            <person name="Medina N."/>
            <person name="Mellado R.P."/>
            <person name="Mizuno M."/>
            <person name="Moestl D."/>
            <person name="Nakai S."/>
            <person name="Noback M."/>
            <person name="Noone D."/>
            <person name="O'Reilly M."/>
            <person name="Ogawa K."/>
            <person name="Ogiwara A."/>
            <person name="Oudega B."/>
            <person name="Park S.-H."/>
            <person name="Parro V."/>
            <person name="Pohl T.M."/>
            <person name="Portetelle D."/>
            <person name="Porwollik S."/>
            <person name="Prescott A.M."/>
            <person name="Presecan E."/>
            <person name="Pujic P."/>
            <person name="Purnelle B."/>
            <person name="Rapoport G."/>
            <person name="Rey M."/>
            <person name="Reynolds S."/>
            <person name="Rieger M."/>
            <person name="Rivolta C."/>
            <person name="Rocha E."/>
            <person name="Roche B."/>
            <person name="Rose M."/>
            <person name="Sadaie Y."/>
            <person name="Sato T."/>
            <person name="Scanlan E."/>
            <person name="Schleich S."/>
            <person name="Schroeter R."/>
            <person name="Scoffone F."/>
            <person name="Sekiguchi J."/>
            <person name="Sekowska A."/>
            <person name="Seror S.J."/>
            <person name="Serror P."/>
            <person name="Shin B.-S."/>
            <person name="Soldo B."/>
            <person name="Sorokin A."/>
            <person name="Tacconi E."/>
            <person name="Takagi T."/>
            <person name="Takahashi H."/>
            <person name="Takemaru K."/>
            <person name="Takeuchi M."/>
            <person name="Tamakoshi A."/>
            <person name="Tanaka T."/>
            <person name="Terpstra P."/>
            <person name="Tognoni A."/>
            <person name="Tosato V."/>
            <person name="Uchiyama S."/>
            <person name="Vandenbol M."/>
            <person name="Vannier F."/>
            <person name="Vassarotti A."/>
            <person name="Viari A."/>
            <person name="Wambutt R."/>
            <person name="Wedler E."/>
            <person name="Wedler H."/>
            <person name="Weitzenegger T."/>
            <person name="Winters P."/>
            <person name="Wipat A."/>
            <person name="Yamamoto H."/>
            <person name="Yamane K."/>
            <person name="Yasumoto K."/>
            <person name="Yata K."/>
            <person name="Yoshida K."/>
            <person name="Yoshikawa H.-F."/>
            <person name="Zumstein E."/>
            <person name="Yoshikawa H."/>
            <person name="Danchin A."/>
        </authorList>
    </citation>
    <scope>NUCLEOTIDE SEQUENCE [LARGE SCALE GENOMIC DNA]</scope>
    <source>
        <strain>168</strain>
    </source>
</reference>
<evidence type="ECO:0000250" key="1"/>
<evidence type="ECO:0000305" key="2"/>
<sequence length="393" mass="43088">MKLAKRVSALTPSTTLAITAKAKELKAAGHDVIGLGAGEPDFNTPQHIIDAAVRSMNEGHTKYTPSGGLAELKNSIAEKFKRDQNIEYKPSQIIVCTGAKHALYTLFQVILDEEDEVIIPTPYWVSYPEQVKLAGGKPVYVEGLEENHFKISPEQLKNAITEKTKAIVINSPSNPTGVMYTEEELSALGEVCLEHDILIVSDEIYEKLTYGGKKHVSIAQLSDRLKEQTVIINGVSKSHSMTGWRIGYAAGSEDIIKAMTNLASHSTSNPTSIAQYGAIAAYNGPSEPLEEMREAFEHRLNTIYAKLIEIPGFSCVKPEGAFYLFPNAKEAAQSCGFKDVDEFVKALLEEEKVAIVPGSGFGSPENVRLSYATSLDLLEEAIERIKRFVEKHS</sequence>
<gene>
    <name type="primary">aspB</name>
    <name type="ordered locus">BSU22370</name>
</gene>
<proteinExistence type="inferred from homology"/>
<keyword id="KW-0032">Aminotransferase</keyword>
<keyword id="KW-0963">Cytoplasm</keyword>
<keyword id="KW-0663">Pyridoxal phosphate</keyword>
<keyword id="KW-1185">Reference proteome</keyword>
<keyword id="KW-0808">Transferase</keyword>
<feature type="chain" id="PRO_0000123836" description="Aspartate aminotransferase">
    <location>
        <begin position="1"/>
        <end position="393"/>
    </location>
</feature>
<feature type="binding site" evidence="1">
    <location>
        <position position="38"/>
    </location>
    <ligand>
        <name>L-aspartate</name>
        <dbReference type="ChEBI" id="CHEBI:29991"/>
    </ligand>
</feature>
<feature type="binding site" evidence="1">
    <location>
        <position position="124"/>
    </location>
    <ligand>
        <name>L-aspartate</name>
        <dbReference type="ChEBI" id="CHEBI:29991"/>
    </ligand>
</feature>
<feature type="binding site" evidence="1">
    <location>
        <position position="174"/>
    </location>
    <ligand>
        <name>L-aspartate</name>
        <dbReference type="ChEBI" id="CHEBI:29991"/>
    </ligand>
</feature>
<feature type="modified residue" description="N6-(pyridoxal phosphate)lysine" evidence="1">
    <location>
        <position position="237"/>
    </location>
</feature>
<dbReference type="EC" id="2.6.1.1"/>
<dbReference type="EMBL" id="L47709">
    <property type="protein sequence ID" value="AAB38454.1"/>
    <property type="molecule type" value="Genomic_DNA"/>
</dbReference>
<dbReference type="EMBL" id="AL009126">
    <property type="protein sequence ID" value="CAB14153.1"/>
    <property type="molecule type" value="Genomic_DNA"/>
</dbReference>
<dbReference type="PIR" id="C69591">
    <property type="entry name" value="C69591"/>
</dbReference>
<dbReference type="RefSeq" id="NP_390118.1">
    <property type="nucleotide sequence ID" value="NC_000964.3"/>
</dbReference>
<dbReference type="RefSeq" id="WP_004398489.1">
    <property type="nucleotide sequence ID" value="NZ_OZ025638.1"/>
</dbReference>
<dbReference type="SMR" id="P53001"/>
<dbReference type="FunCoup" id="P53001">
    <property type="interactions" value="678"/>
</dbReference>
<dbReference type="IntAct" id="P53001">
    <property type="interactions" value="1"/>
</dbReference>
<dbReference type="MINT" id="P53001"/>
<dbReference type="STRING" id="224308.BSU22370"/>
<dbReference type="jPOST" id="P53001"/>
<dbReference type="PaxDb" id="224308-BSU22370"/>
<dbReference type="EnsemblBacteria" id="CAB14153">
    <property type="protein sequence ID" value="CAB14153"/>
    <property type="gene ID" value="BSU_22370"/>
</dbReference>
<dbReference type="GeneID" id="939037"/>
<dbReference type="KEGG" id="bsu:BSU22370"/>
<dbReference type="PATRIC" id="fig|224308.179.peg.2441"/>
<dbReference type="eggNOG" id="COG0436">
    <property type="taxonomic scope" value="Bacteria"/>
</dbReference>
<dbReference type="InParanoid" id="P53001"/>
<dbReference type="OrthoDB" id="9802328at2"/>
<dbReference type="PhylomeDB" id="P53001"/>
<dbReference type="BioCyc" id="BSUB:BSU22370-MONOMER"/>
<dbReference type="Proteomes" id="UP000001570">
    <property type="component" value="Chromosome"/>
</dbReference>
<dbReference type="GO" id="GO:0005737">
    <property type="term" value="C:cytoplasm"/>
    <property type="evidence" value="ECO:0007669"/>
    <property type="project" value="UniProtKB-SubCell"/>
</dbReference>
<dbReference type="GO" id="GO:0004069">
    <property type="term" value="F:L-aspartate:2-oxoglutarate aminotransferase activity"/>
    <property type="evidence" value="ECO:0007669"/>
    <property type="project" value="UniProtKB-EC"/>
</dbReference>
<dbReference type="GO" id="GO:0030170">
    <property type="term" value="F:pyridoxal phosphate binding"/>
    <property type="evidence" value="ECO:0007669"/>
    <property type="project" value="InterPro"/>
</dbReference>
<dbReference type="GO" id="GO:0008483">
    <property type="term" value="F:transaminase activity"/>
    <property type="evidence" value="ECO:0000318"/>
    <property type="project" value="GO_Central"/>
</dbReference>
<dbReference type="GO" id="GO:0006520">
    <property type="term" value="P:amino acid metabolic process"/>
    <property type="evidence" value="ECO:0007669"/>
    <property type="project" value="InterPro"/>
</dbReference>
<dbReference type="GO" id="GO:0009058">
    <property type="term" value="P:biosynthetic process"/>
    <property type="evidence" value="ECO:0007669"/>
    <property type="project" value="InterPro"/>
</dbReference>
<dbReference type="CDD" id="cd00609">
    <property type="entry name" value="AAT_like"/>
    <property type="match status" value="1"/>
</dbReference>
<dbReference type="FunFam" id="3.40.640.10:FF:000033">
    <property type="entry name" value="Aspartate aminotransferase"/>
    <property type="match status" value="1"/>
</dbReference>
<dbReference type="Gene3D" id="3.90.1150.10">
    <property type="entry name" value="Aspartate Aminotransferase, domain 1"/>
    <property type="match status" value="1"/>
</dbReference>
<dbReference type="Gene3D" id="3.40.640.10">
    <property type="entry name" value="Type I PLP-dependent aspartate aminotransferase-like (Major domain)"/>
    <property type="match status" value="1"/>
</dbReference>
<dbReference type="InterPro" id="IPR004839">
    <property type="entry name" value="Aminotransferase_I/II_large"/>
</dbReference>
<dbReference type="InterPro" id="IPR050596">
    <property type="entry name" value="AspAT/PAT-like"/>
</dbReference>
<dbReference type="InterPro" id="IPR004838">
    <property type="entry name" value="NHTrfase_class1_PyrdxlP-BS"/>
</dbReference>
<dbReference type="InterPro" id="IPR015424">
    <property type="entry name" value="PyrdxlP-dep_Trfase"/>
</dbReference>
<dbReference type="InterPro" id="IPR015421">
    <property type="entry name" value="PyrdxlP-dep_Trfase_major"/>
</dbReference>
<dbReference type="InterPro" id="IPR015422">
    <property type="entry name" value="PyrdxlP-dep_Trfase_small"/>
</dbReference>
<dbReference type="PANTHER" id="PTHR46383">
    <property type="entry name" value="ASPARTATE AMINOTRANSFERASE"/>
    <property type="match status" value="1"/>
</dbReference>
<dbReference type="PANTHER" id="PTHR46383:SF1">
    <property type="entry name" value="ASPARTATE AMINOTRANSFERASE"/>
    <property type="match status" value="1"/>
</dbReference>
<dbReference type="Pfam" id="PF00155">
    <property type="entry name" value="Aminotran_1_2"/>
    <property type="match status" value="1"/>
</dbReference>
<dbReference type="PRINTS" id="PR00753">
    <property type="entry name" value="ACCSYNTHASE"/>
</dbReference>
<dbReference type="SUPFAM" id="SSF53383">
    <property type="entry name" value="PLP-dependent transferases"/>
    <property type="match status" value="1"/>
</dbReference>
<dbReference type="PROSITE" id="PS00105">
    <property type="entry name" value="AA_TRANSFER_CLASS_1"/>
    <property type="match status" value="1"/>
</dbReference>
<protein>
    <recommendedName>
        <fullName>Aspartate aminotransferase</fullName>
        <shortName>AspAT</shortName>
        <ecNumber>2.6.1.1</ecNumber>
    </recommendedName>
    <alternativeName>
        <fullName>Transaminase A</fullName>
    </alternativeName>
</protein>
<organism>
    <name type="scientific">Bacillus subtilis (strain 168)</name>
    <dbReference type="NCBI Taxonomy" id="224308"/>
    <lineage>
        <taxon>Bacteria</taxon>
        <taxon>Bacillati</taxon>
        <taxon>Bacillota</taxon>
        <taxon>Bacilli</taxon>
        <taxon>Bacillales</taxon>
        <taxon>Bacillaceae</taxon>
        <taxon>Bacillus</taxon>
    </lineage>
</organism>
<comment type="catalytic activity">
    <reaction>
        <text>L-aspartate + 2-oxoglutarate = oxaloacetate + L-glutamate</text>
        <dbReference type="Rhea" id="RHEA:21824"/>
        <dbReference type="ChEBI" id="CHEBI:16452"/>
        <dbReference type="ChEBI" id="CHEBI:16810"/>
        <dbReference type="ChEBI" id="CHEBI:29985"/>
        <dbReference type="ChEBI" id="CHEBI:29991"/>
        <dbReference type="EC" id="2.6.1.1"/>
    </reaction>
</comment>
<comment type="cofactor">
    <cofactor>
        <name>pyridoxal 5'-phosphate</name>
        <dbReference type="ChEBI" id="CHEBI:597326"/>
    </cofactor>
</comment>
<comment type="subunit">
    <text evidence="1">Homodimer.</text>
</comment>
<comment type="subcellular location">
    <subcellularLocation>
        <location evidence="1">Cytoplasm</location>
    </subcellularLocation>
</comment>
<comment type="similarity">
    <text evidence="2">Belongs to the class-I pyridoxal-phosphate-dependent aminotransferase family.</text>
</comment>
<accession>P53001</accession>
<name>AAT1_BACSU</name>